<evidence type="ECO:0000250" key="1"/>
<evidence type="ECO:0000255" key="2">
    <source>
        <dbReference type="PROSITE-ProRule" id="PRU10035"/>
    </source>
</evidence>
<evidence type="ECO:0000255" key="3">
    <source>
        <dbReference type="PROSITE-ProRule" id="PRU10036"/>
    </source>
</evidence>
<evidence type="ECO:0000269" key="4">
    <source>
    </source>
</evidence>
<evidence type="ECO:0000269" key="5">
    <source>
    </source>
</evidence>
<evidence type="ECO:0000305" key="6"/>
<protein>
    <recommendedName>
        <fullName>Basic phospholipase A2 taipoxin alpha chain</fullName>
        <shortName>svPLA2</shortName>
        <ecNumber>3.1.1.4</ecNumber>
    </recommendedName>
    <alternativeName>
        <fullName>Phosphatidylcholine 2-acylhydrolase</fullName>
    </alternativeName>
</protein>
<feature type="chain" id="PRO_0000161678" description="Basic phospholipase A2 taipoxin alpha chain">
    <location>
        <begin position="1"/>
        <end position="119"/>
    </location>
</feature>
<feature type="active site" evidence="1">
    <location>
        <position position="48"/>
    </location>
</feature>
<feature type="active site" evidence="1">
    <location>
        <position position="93"/>
    </location>
</feature>
<feature type="binding site" evidence="1">
    <location>
        <position position="28"/>
    </location>
    <ligand>
        <name>Ca(2+)</name>
        <dbReference type="ChEBI" id="CHEBI:29108"/>
    </ligand>
</feature>
<feature type="binding site" evidence="1">
    <location>
        <position position="30"/>
    </location>
    <ligand>
        <name>Ca(2+)</name>
        <dbReference type="ChEBI" id="CHEBI:29108"/>
    </ligand>
</feature>
<feature type="binding site" evidence="1">
    <location>
        <position position="32"/>
    </location>
    <ligand>
        <name>Ca(2+)</name>
        <dbReference type="ChEBI" id="CHEBI:29108"/>
    </ligand>
</feature>
<feature type="binding site" evidence="1">
    <location>
        <position position="49"/>
    </location>
    <ligand>
        <name>Ca(2+)</name>
        <dbReference type="ChEBI" id="CHEBI:29108"/>
    </ligand>
</feature>
<feature type="disulfide bond" evidence="1">
    <location>
        <begin position="11"/>
        <end position="72"/>
    </location>
</feature>
<feature type="disulfide bond" evidence="1">
    <location>
        <begin position="27"/>
        <end position="118"/>
    </location>
</feature>
<feature type="disulfide bond" evidence="1">
    <location>
        <begin position="29"/>
        <end position="45"/>
    </location>
</feature>
<feature type="disulfide bond" evidence="1">
    <location>
        <begin position="44"/>
        <end position="99"/>
    </location>
</feature>
<feature type="disulfide bond" evidence="1">
    <location>
        <begin position="51"/>
        <end position="92"/>
    </location>
</feature>
<feature type="disulfide bond" evidence="1">
    <location>
        <begin position="61"/>
        <end position="85"/>
    </location>
</feature>
<feature type="disulfide bond" evidence="1">
    <location>
        <begin position="79"/>
        <end position="90"/>
    </location>
</feature>
<accession>P00614</accession>
<comment type="function">
    <text>Heterotrimer: Snake venom phospholipase A2 (PLA2) heterotrimer that acts as a potent presynaptic neurotoxin by blocking synaptic transmission and synaptic vesicle recycling. May act by binding in a calcium-dependent fashion to neurotonal pentraxin-1 (NPTX1) and neurotonal pentraxin-2 (NPTX2), but not to neuronal pentraxin receptor (NPTXR). Also binds to taipoxin-associated calcium binding protein 49 (RCN2), a protein localized in the lumen of endoplasmic reticulum.</text>
</comment>
<comment type="function">
    <text>Monomer (alpha chain): Snake venom phospholipase A2 (PLA2) alpha chain that possesses the same high enzymatic activity as the heterotrimer. PLA2 catalyzes the calcium-dependent hydrolysis of the 2-acyl groups in 3-sn-phosphoglycerides.</text>
</comment>
<comment type="catalytic activity">
    <reaction evidence="2 3 4">
        <text>a 1,2-diacyl-sn-glycero-3-phosphocholine + H2O = a 1-acyl-sn-glycero-3-phosphocholine + a fatty acid + H(+)</text>
        <dbReference type="Rhea" id="RHEA:15801"/>
        <dbReference type="ChEBI" id="CHEBI:15377"/>
        <dbReference type="ChEBI" id="CHEBI:15378"/>
        <dbReference type="ChEBI" id="CHEBI:28868"/>
        <dbReference type="ChEBI" id="CHEBI:57643"/>
        <dbReference type="ChEBI" id="CHEBI:58168"/>
        <dbReference type="EC" id="3.1.1.4"/>
    </reaction>
</comment>
<comment type="cofactor">
    <cofactor evidence="1">
        <name>Ca(2+)</name>
        <dbReference type="ChEBI" id="CHEBI:29108"/>
    </cofactor>
    <text evidence="1">Binds 1 Ca(2+) ion.</text>
</comment>
<comment type="subunit">
    <text evidence="5">Heterotrimer of alpha, beta, and gamma chains; non-covalently linked.</text>
</comment>
<comment type="subcellular location">
    <subcellularLocation>
        <location>Secreted</location>
    </subcellularLocation>
</comment>
<comment type="tissue specificity">
    <text>Expressed by the venom gland.</text>
</comment>
<comment type="mass spectrometry"/>
<comment type="toxic dose">
    <text evidence="5">Monomer (alpha chain): LD(50) is 0.3 mg/kg by intravenous injection into mice.</text>
</comment>
<comment type="toxic dose">
    <text evidence="5">Heterotrimer: LD(50) is 2 ug/kg by intravenous injection into mice.</text>
</comment>
<comment type="similarity">
    <text evidence="6">Belongs to the phospholipase A2 family. Group I subfamily. D49 sub-subfamily.</text>
</comment>
<proteinExistence type="evidence at protein level"/>
<sequence>NLLQFGFMIRCANRRSRPVWHYMDYGCYCGKGGSGTPVDDLDRCCQVHDECYGEAVRRFGCAPYWTLYSWKCYGKAPTCNTKTRCQRFVCRCDAKAAECFARSPYQNSNWNINTKARCR</sequence>
<dbReference type="EC" id="3.1.1.4"/>
<dbReference type="PIR" id="A00754">
    <property type="entry name" value="PSOXA"/>
</dbReference>
<dbReference type="SMR" id="P00614"/>
<dbReference type="GO" id="GO:0005576">
    <property type="term" value="C:extracellular region"/>
    <property type="evidence" value="ECO:0007669"/>
    <property type="project" value="UniProtKB-SubCell"/>
</dbReference>
<dbReference type="GO" id="GO:0005509">
    <property type="term" value="F:calcium ion binding"/>
    <property type="evidence" value="ECO:0007669"/>
    <property type="project" value="InterPro"/>
</dbReference>
<dbReference type="GO" id="GO:0047498">
    <property type="term" value="F:calcium-dependent phospholipase A2 activity"/>
    <property type="evidence" value="ECO:0007669"/>
    <property type="project" value="TreeGrafter"/>
</dbReference>
<dbReference type="GO" id="GO:0005543">
    <property type="term" value="F:phospholipid binding"/>
    <property type="evidence" value="ECO:0007669"/>
    <property type="project" value="TreeGrafter"/>
</dbReference>
<dbReference type="GO" id="GO:0090729">
    <property type="term" value="F:toxin activity"/>
    <property type="evidence" value="ECO:0007669"/>
    <property type="project" value="UniProtKB-KW"/>
</dbReference>
<dbReference type="GO" id="GO:0050482">
    <property type="term" value="P:arachidonate secretion"/>
    <property type="evidence" value="ECO:0007669"/>
    <property type="project" value="InterPro"/>
</dbReference>
<dbReference type="GO" id="GO:0016042">
    <property type="term" value="P:lipid catabolic process"/>
    <property type="evidence" value="ECO:0007669"/>
    <property type="project" value="UniProtKB-KW"/>
</dbReference>
<dbReference type="GO" id="GO:0006644">
    <property type="term" value="P:phospholipid metabolic process"/>
    <property type="evidence" value="ECO:0007669"/>
    <property type="project" value="InterPro"/>
</dbReference>
<dbReference type="CDD" id="cd00125">
    <property type="entry name" value="PLA2c"/>
    <property type="match status" value="1"/>
</dbReference>
<dbReference type="FunFam" id="1.20.90.10:FF:000007">
    <property type="entry name" value="Acidic phospholipase A2"/>
    <property type="match status" value="1"/>
</dbReference>
<dbReference type="Gene3D" id="1.20.90.10">
    <property type="entry name" value="Phospholipase A2 domain"/>
    <property type="match status" value="1"/>
</dbReference>
<dbReference type="InterPro" id="IPR001211">
    <property type="entry name" value="PLipase_A2"/>
</dbReference>
<dbReference type="InterPro" id="IPR033112">
    <property type="entry name" value="PLipase_A2_Asp_AS"/>
</dbReference>
<dbReference type="InterPro" id="IPR016090">
    <property type="entry name" value="PLipase_A2_dom"/>
</dbReference>
<dbReference type="InterPro" id="IPR036444">
    <property type="entry name" value="PLipase_A2_dom_sf"/>
</dbReference>
<dbReference type="InterPro" id="IPR033113">
    <property type="entry name" value="PLipase_A2_His_AS"/>
</dbReference>
<dbReference type="PANTHER" id="PTHR11716:SF51">
    <property type="entry name" value="PHOSPHOLIPASE A2"/>
    <property type="match status" value="1"/>
</dbReference>
<dbReference type="PANTHER" id="PTHR11716">
    <property type="entry name" value="PHOSPHOLIPASE A2 FAMILY MEMBER"/>
    <property type="match status" value="1"/>
</dbReference>
<dbReference type="Pfam" id="PF00068">
    <property type="entry name" value="Phospholip_A2_1"/>
    <property type="match status" value="1"/>
</dbReference>
<dbReference type="PRINTS" id="PR00389">
    <property type="entry name" value="PHPHLIPASEA2"/>
</dbReference>
<dbReference type="SMART" id="SM00085">
    <property type="entry name" value="PA2c"/>
    <property type="match status" value="1"/>
</dbReference>
<dbReference type="SUPFAM" id="SSF48619">
    <property type="entry name" value="Phospholipase A2, PLA2"/>
    <property type="match status" value="1"/>
</dbReference>
<dbReference type="PROSITE" id="PS00119">
    <property type="entry name" value="PA2_ASP"/>
    <property type="match status" value="1"/>
</dbReference>
<dbReference type="PROSITE" id="PS00118">
    <property type="entry name" value="PA2_HIS"/>
    <property type="match status" value="1"/>
</dbReference>
<reference key="1">
    <citation type="journal article" date="1982" name="Eur. J. Biochem.">
        <title>Amino-acid sequence of the alpha-subunit of taipoxin, an extremely potent presynaptic neurotoxin from the Australian snake taipan (Oxyuranus s. scutellatus).</title>
        <authorList>
            <person name="Lind P."/>
            <person name="Eaker D."/>
        </authorList>
    </citation>
    <scope>PROTEIN SEQUENCE</scope>
    <source>
        <tissue>Venom</tissue>
    </source>
</reference>
<reference key="2">
    <citation type="journal article" date="2012" name="FEBS J.">
        <title>Structural analysis of trimeric phospholipase A2 neurotoxin from the Australian taipan snake venom.</title>
        <authorList>
            <person name="Cendron L."/>
            <person name="Micetic I."/>
            <person name="Polverino de Laureto P."/>
            <person name="Paoli M."/>
        </authorList>
    </citation>
    <scope>PROTEIN SEQUENCE OF 1-4</scope>
    <scope>FUNCTION</scope>
    <scope>ENZYMATIC ACTIVITY</scope>
    <scope>MASS SPECTROMETRY</scope>
    <source>
        <tissue>Venom</tissue>
    </source>
</reference>
<reference key="3">
    <citation type="journal article" date="1976" name="Eur. J. Biochem.">
        <title>Taipoxin, an extremely potent presynaptic neurotoxin from the venom of the australian snake taipan (Oxyuranus s. scutellatus). Isolation, characterization, quaternary structure and pharmacological properties.</title>
        <authorList>
            <person name="Fohlman J."/>
            <person name="Eaker D."/>
            <person name="Karlsoon E."/>
            <person name="Thesleff S."/>
        </authorList>
    </citation>
    <scope>FUNCTION</scope>
    <scope>SUBUNIT</scope>
    <scope>TOXIC DOSE</scope>
    <source>
        <tissue>Venom</tissue>
    </source>
</reference>
<reference key="4">
    <citation type="journal article" date="1995" name="J. Neurochem.">
        <title>Novel reticular calcium binding protein is purified on taipoxin columns.</title>
        <authorList>
            <person name="Dodds D."/>
            <person name="Schlimgen A.K."/>
            <person name="Lu S.Y."/>
            <person name="Perin M.S."/>
        </authorList>
    </citation>
    <scope>FUNCTION AS RCN2 BINDING PROTEIN</scope>
</reference>
<reference key="5">
    <citation type="journal article" date="2000" name="J. Biol. Chem.">
        <title>Biochemical interactions of the neuronal pentraxins. Neuronal pentraxin (NP) receptor binds to taipoxin and taipoxin-associated calcium-binding protein 49 via NP1 and NP2.</title>
        <authorList>
            <person name="Kirkpatrick L.L."/>
            <person name="Matzuk M.M."/>
            <person name="Dodds D.C."/>
            <person name="Perin M.S."/>
        </authorList>
    </citation>
    <scope>FUNCTION AS PENTRAXIN BINDING PROTEIN</scope>
</reference>
<organism>
    <name type="scientific">Oxyuranus scutellatus scutellatus</name>
    <name type="common">Australian taipan</name>
    <name type="synonym">Coastal taipan</name>
    <dbReference type="NCBI Taxonomy" id="8667"/>
    <lineage>
        <taxon>Eukaryota</taxon>
        <taxon>Metazoa</taxon>
        <taxon>Chordata</taxon>
        <taxon>Craniata</taxon>
        <taxon>Vertebrata</taxon>
        <taxon>Euteleostomi</taxon>
        <taxon>Lepidosauria</taxon>
        <taxon>Squamata</taxon>
        <taxon>Bifurcata</taxon>
        <taxon>Unidentata</taxon>
        <taxon>Episquamata</taxon>
        <taxon>Toxicofera</taxon>
        <taxon>Serpentes</taxon>
        <taxon>Colubroidea</taxon>
        <taxon>Elapidae</taxon>
        <taxon>Hydrophiinae</taxon>
        <taxon>Oxyuranus</taxon>
    </lineage>
</organism>
<name>PA2TA_OXYSC</name>
<keyword id="KW-0106">Calcium</keyword>
<keyword id="KW-0903">Direct protein sequencing</keyword>
<keyword id="KW-1015">Disulfide bond</keyword>
<keyword id="KW-0378">Hydrolase</keyword>
<keyword id="KW-0442">Lipid degradation</keyword>
<keyword id="KW-0443">Lipid metabolism</keyword>
<keyword id="KW-0479">Metal-binding</keyword>
<keyword id="KW-0528">Neurotoxin</keyword>
<keyword id="KW-0638">Presynaptic neurotoxin</keyword>
<keyword id="KW-0964">Secreted</keyword>
<keyword id="KW-0800">Toxin</keyword>